<accession>P38095</accession>
<accession>C8VUT6</accession>
<accession>Q5BEZ3</accession>
<reference key="1">
    <citation type="journal article" date="2005" name="Nature">
        <title>Sequencing of Aspergillus nidulans and comparative analysis with A. fumigatus and A. oryzae.</title>
        <authorList>
            <person name="Galagan J.E."/>
            <person name="Calvo S.E."/>
            <person name="Cuomo C."/>
            <person name="Ma L.-J."/>
            <person name="Wortman J.R."/>
            <person name="Batzoglou S."/>
            <person name="Lee S.-I."/>
            <person name="Bastuerkmen M."/>
            <person name="Spevak C.C."/>
            <person name="Clutterbuck J."/>
            <person name="Kapitonov V."/>
            <person name="Jurka J."/>
            <person name="Scazzocchio C."/>
            <person name="Farman M.L."/>
            <person name="Butler J."/>
            <person name="Purcell S."/>
            <person name="Harris S."/>
            <person name="Braus G.H."/>
            <person name="Draht O."/>
            <person name="Busch S."/>
            <person name="D'Enfert C."/>
            <person name="Bouchier C."/>
            <person name="Goldman G.H."/>
            <person name="Bell-Pedersen D."/>
            <person name="Griffiths-Jones S."/>
            <person name="Doonan J.H."/>
            <person name="Yu J."/>
            <person name="Vienken K."/>
            <person name="Pain A."/>
            <person name="Freitag M."/>
            <person name="Selker E.U."/>
            <person name="Archer D.B."/>
            <person name="Penalva M.A."/>
            <person name="Oakley B.R."/>
            <person name="Momany M."/>
            <person name="Tanaka T."/>
            <person name="Kumagai T."/>
            <person name="Asai K."/>
            <person name="Machida M."/>
            <person name="Nierman W.C."/>
            <person name="Denning D.W."/>
            <person name="Caddick M.X."/>
            <person name="Hynes M."/>
            <person name="Paoletti M."/>
            <person name="Fischer R."/>
            <person name="Miller B.L."/>
            <person name="Dyer P.S."/>
            <person name="Sachs M.S."/>
            <person name="Osmani S.A."/>
            <person name="Birren B.W."/>
        </authorList>
    </citation>
    <scope>NUCLEOTIDE SEQUENCE [LARGE SCALE GENOMIC DNA]</scope>
    <source>
        <strain>FGSC A4 / ATCC 38163 / CBS 112.46 / NRRL 194 / M139</strain>
    </source>
</reference>
<reference key="2">
    <citation type="journal article" date="2009" name="Fungal Genet. Biol.">
        <title>The 2008 update of the Aspergillus nidulans genome annotation: a community effort.</title>
        <authorList>
            <person name="Wortman J.R."/>
            <person name="Gilsenan J.M."/>
            <person name="Joardar V."/>
            <person name="Deegan J."/>
            <person name="Clutterbuck J."/>
            <person name="Andersen M.R."/>
            <person name="Archer D."/>
            <person name="Bencina M."/>
            <person name="Braus G."/>
            <person name="Coutinho P."/>
            <person name="von Dohren H."/>
            <person name="Doonan J."/>
            <person name="Driessen A.J."/>
            <person name="Durek P."/>
            <person name="Espeso E."/>
            <person name="Fekete E."/>
            <person name="Flipphi M."/>
            <person name="Estrada C.G."/>
            <person name="Geysens S."/>
            <person name="Goldman G."/>
            <person name="de Groot P.W."/>
            <person name="Hansen K."/>
            <person name="Harris S.D."/>
            <person name="Heinekamp T."/>
            <person name="Helmstaedt K."/>
            <person name="Henrissat B."/>
            <person name="Hofmann G."/>
            <person name="Homan T."/>
            <person name="Horio T."/>
            <person name="Horiuchi H."/>
            <person name="James S."/>
            <person name="Jones M."/>
            <person name="Karaffa L."/>
            <person name="Karanyi Z."/>
            <person name="Kato M."/>
            <person name="Keller N."/>
            <person name="Kelly D.E."/>
            <person name="Kiel J.A."/>
            <person name="Kim J.M."/>
            <person name="van der Klei I.J."/>
            <person name="Klis F.M."/>
            <person name="Kovalchuk A."/>
            <person name="Krasevec N."/>
            <person name="Kubicek C.P."/>
            <person name="Liu B."/>
            <person name="Maccabe A."/>
            <person name="Meyer V."/>
            <person name="Mirabito P."/>
            <person name="Miskei M."/>
            <person name="Mos M."/>
            <person name="Mullins J."/>
            <person name="Nelson D.R."/>
            <person name="Nielsen J."/>
            <person name="Oakley B.R."/>
            <person name="Osmani S.A."/>
            <person name="Pakula T."/>
            <person name="Paszewski A."/>
            <person name="Paulsen I."/>
            <person name="Pilsyk S."/>
            <person name="Pocsi I."/>
            <person name="Punt P.J."/>
            <person name="Ram A.F."/>
            <person name="Ren Q."/>
            <person name="Robellet X."/>
            <person name="Robson G."/>
            <person name="Seiboth B."/>
            <person name="van Solingen P."/>
            <person name="Specht T."/>
            <person name="Sun J."/>
            <person name="Taheri-Talesh N."/>
            <person name="Takeshita N."/>
            <person name="Ussery D."/>
            <person name="vanKuyk P.A."/>
            <person name="Visser H."/>
            <person name="van de Vondervoort P.J."/>
            <person name="de Vries R.P."/>
            <person name="Walton J."/>
            <person name="Xiang X."/>
            <person name="Xiong Y."/>
            <person name="Zeng A.P."/>
            <person name="Brandt B.W."/>
            <person name="Cornell M.J."/>
            <person name="van den Hondel C.A."/>
            <person name="Visser J."/>
            <person name="Oliver S.G."/>
            <person name="Turner G."/>
        </authorList>
    </citation>
    <scope>GENOME REANNOTATION</scope>
    <source>
        <strain>FGSC A4 / ATCC 38163 / CBS 112.46 / NRRL 194 / M139</strain>
    </source>
</reference>
<reference key="3">
    <citation type="journal article" date="1992" name="Mol. Cell. Biol.">
        <title>Molecular characterization of the lam locus and sequences involved in regulation by the AmdR protein of Aspergillus nidulans.</title>
        <authorList>
            <person name="Richardson I.B."/>
            <person name="Katz M.E."/>
            <person name="Hynes M.J."/>
        </authorList>
    </citation>
    <scope>NUCLEOTIDE SEQUENCE [GENOMIC DNA] OF 1-103</scope>
    <source>
        <strain>biA1 niiA4</strain>
    </source>
</reference>
<reference key="4">
    <citation type="journal article" date="1989" name="Gene">
        <title>Gene function identified by interspecific transformation.</title>
        <authorList>
            <person name="Katz M.E."/>
            <person name="Hynes M.J."/>
        </authorList>
    </citation>
    <scope>FUNCTION</scope>
</reference>
<reference key="5">
    <citation type="journal article" date="1989" name="Genetics">
        <title>Characterization of the amdR-controlled lamA and lamB genes of Aspergillus nidulans.</title>
        <authorList>
            <person name="Katz M.E."/>
            <person name="Hynes M.J."/>
        </authorList>
    </citation>
    <scope>FUNCTION</scope>
    <scope>INDUCTION</scope>
</reference>
<comment type="function">
    <text evidence="4 5">Involved in the utilization of lactams. Required for the conversion of exogenous 2-pyrrolidinone (gamma-butyrolactam) to endogenous gamma-amino-n-butyrate (GABA).</text>
</comment>
<comment type="catalytic activity">
    <reaction>
        <text>urea + hydrogencarbonate + ATP = urea-1-carboxylate + ADP + phosphate + H(+)</text>
        <dbReference type="Rhea" id="RHEA:20896"/>
        <dbReference type="ChEBI" id="CHEBI:15378"/>
        <dbReference type="ChEBI" id="CHEBI:15832"/>
        <dbReference type="ChEBI" id="CHEBI:16199"/>
        <dbReference type="ChEBI" id="CHEBI:17544"/>
        <dbReference type="ChEBI" id="CHEBI:30616"/>
        <dbReference type="ChEBI" id="CHEBI:43474"/>
        <dbReference type="ChEBI" id="CHEBI:456216"/>
        <dbReference type="EC" id="6.3.4.6"/>
    </reaction>
</comment>
<comment type="cofactor">
    <cofactor evidence="1">
        <name>biotin</name>
        <dbReference type="ChEBI" id="CHEBI:57586"/>
    </cofactor>
</comment>
<comment type="induction">
    <text evidence="4">By beta-alanine.</text>
</comment>
<comment type="sequence caution" evidence="6">
    <conflict type="erroneous translation">
        <sequence resource="EMBL-CDS" id="AAA33312"/>
    </conflict>
    <text>Wrong choice of frame.</text>
</comment>
<proteinExistence type="evidence at transcript level"/>
<evidence type="ECO:0000250" key="1"/>
<evidence type="ECO:0000255" key="2">
    <source>
        <dbReference type="PROSITE-ProRule" id="PRU00409"/>
    </source>
</evidence>
<evidence type="ECO:0000255" key="3">
    <source>
        <dbReference type="PROSITE-ProRule" id="PRU01066"/>
    </source>
</evidence>
<evidence type="ECO:0000269" key="4">
    <source>
    </source>
</evidence>
<evidence type="ECO:0000269" key="5">
    <source>
    </source>
</evidence>
<evidence type="ECO:0000305" key="6"/>
<gene>
    <name type="primary">lamA</name>
    <name type="ORF">AN0887</name>
</gene>
<feature type="chain" id="PRO_0000084354" description="Putative urea carboxylase">
    <location>
        <begin position="1"/>
        <end position="1241"/>
    </location>
</feature>
<feature type="domain" description="Biotin carboxylation">
    <location>
        <begin position="3"/>
        <end position="459"/>
    </location>
</feature>
<feature type="domain" description="ATP-grasp" evidence="2">
    <location>
        <begin position="121"/>
        <end position="321"/>
    </location>
</feature>
<feature type="domain" description="Biotinyl-binding" evidence="3">
    <location>
        <begin position="1159"/>
        <end position="1239"/>
    </location>
</feature>
<feature type="binding site" evidence="1">
    <location>
        <position position="117"/>
    </location>
    <ligand>
        <name>ATP</name>
        <dbReference type="ChEBI" id="CHEBI:30616"/>
    </ligand>
</feature>
<feature type="binding site" evidence="1">
    <location>
        <position position="201"/>
    </location>
    <ligand>
        <name>ATP</name>
        <dbReference type="ChEBI" id="CHEBI:30616"/>
    </ligand>
</feature>
<feature type="modified residue" description="N6-biotinyllysine" evidence="1 3">
    <location>
        <position position="1202"/>
    </location>
</feature>
<dbReference type="EC" id="6.3.4.6"/>
<dbReference type="EMBL" id="AACD01000014">
    <property type="protein sequence ID" value="EAA65916.1"/>
    <property type="molecule type" value="Genomic_DNA"/>
</dbReference>
<dbReference type="EMBL" id="M77283">
    <property type="protein sequence ID" value="AAA33312.1"/>
    <property type="status" value="ALT_SEQ"/>
    <property type="molecule type" value="Genomic_DNA"/>
</dbReference>
<dbReference type="EMBL" id="BN001308">
    <property type="protein sequence ID" value="CBF88588.1"/>
    <property type="molecule type" value="Genomic_DNA"/>
</dbReference>
<dbReference type="PIR" id="A42064">
    <property type="entry name" value="A42064"/>
</dbReference>
<dbReference type="RefSeq" id="XP_658491.1">
    <property type="nucleotide sequence ID" value="XM_653399.1"/>
</dbReference>
<dbReference type="SMR" id="P38095"/>
<dbReference type="FunCoup" id="P38095">
    <property type="interactions" value="168"/>
</dbReference>
<dbReference type="STRING" id="227321.P38095"/>
<dbReference type="EnsemblFungi" id="CBF88588">
    <property type="protein sequence ID" value="CBF88588"/>
    <property type="gene ID" value="ANIA_00887"/>
</dbReference>
<dbReference type="KEGG" id="ani:ANIA_00887"/>
<dbReference type="eggNOG" id="KOG0238">
    <property type="taxonomic scope" value="Eukaryota"/>
</dbReference>
<dbReference type="HOGENOM" id="CLU_002162_0_1_1"/>
<dbReference type="InParanoid" id="P38095"/>
<dbReference type="OMA" id="TLQMWNR"/>
<dbReference type="OrthoDB" id="196847at2759"/>
<dbReference type="Proteomes" id="UP000000560">
    <property type="component" value="Chromosome VIII"/>
</dbReference>
<dbReference type="GO" id="GO:0005524">
    <property type="term" value="F:ATP binding"/>
    <property type="evidence" value="ECO:0007669"/>
    <property type="project" value="UniProtKB-KW"/>
</dbReference>
<dbReference type="GO" id="GO:0016787">
    <property type="term" value="F:hydrolase activity"/>
    <property type="evidence" value="ECO:0007669"/>
    <property type="project" value="UniProtKB-KW"/>
</dbReference>
<dbReference type="GO" id="GO:0046872">
    <property type="term" value="F:metal ion binding"/>
    <property type="evidence" value="ECO:0007669"/>
    <property type="project" value="InterPro"/>
</dbReference>
<dbReference type="GO" id="GO:0004847">
    <property type="term" value="F:urea carboxylase activity"/>
    <property type="evidence" value="ECO:0007669"/>
    <property type="project" value="UniProtKB-EC"/>
</dbReference>
<dbReference type="CDD" id="cd06850">
    <property type="entry name" value="biotinyl_domain"/>
    <property type="match status" value="1"/>
</dbReference>
<dbReference type="FunFam" id="3.30.1490.20:FF:000003">
    <property type="entry name" value="acetyl-CoA carboxylase isoform X1"/>
    <property type="match status" value="1"/>
</dbReference>
<dbReference type="FunFam" id="3.40.50.20:FF:000010">
    <property type="entry name" value="Propionyl-CoA carboxylase subunit alpha"/>
    <property type="match status" value="1"/>
</dbReference>
<dbReference type="Gene3D" id="2.40.50.100">
    <property type="match status" value="1"/>
</dbReference>
<dbReference type="Gene3D" id="3.30.1360.40">
    <property type="match status" value="1"/>
</dbReference>
<dbReference type="Gene3D" id="3.30.470.20">
    <property type="entry name" value="ATP-grasp fold, B domain"/>
    <property type="match status" value="1"/>
</dbReference>
<dbReference type="Gene3D" id="2.40.100.10">
    <property type="entry name" value="Cyclophilin-like"/>
    <property type="match status" value="2"/>
</dbReference>
<dbReference type="InterPro" id="IPR011761">
    <property type="entry name" value="ATP-grasp"/>
</dbReference>
<dbReference type="InterPro" id="IPR005481">
    <property type="entry name" value="BC-like_N"/>
</dbReference>
<dbReference type="InterPro" id="IPR001882">
    <property type="entry name" value="Biotin_BS"/>
</dbReference>
<dbReference type="InterPro" id="IPR050856">
    <property type="entry name" value="Biotin_carboxylase_complex"/>
</dbReference>
<dbReference type="InterPro" id="IPR011764">
    <property type="entry name" value="Biotin_carboxylation_dom"/>
</dbReference>
<dbReference type="InterPro" id="IPR005482">
    <property type="entry name" value="Biotin_COase_C"/>
</dbReference>
<dbReference type="InterPro" id="IPR000089">
    <property type="entry name" value="Biotin_lipoyl"/>
</dbReference>
<dbReference type="InterPro" id="IPR005479">
    <property type="entry name" value="CbamoylP_synth_lsu-like_ATP-bd"/>
</dbReference>
<dbReference type="InterPro" id="IPR003778">
    <property type="entry name" value="CT_A_B"/>
</dbReference>
<dbReference type="InterPro" id="IPR003833">
    <property type="entry name" value="CT_C_D"/>
</dbReference>
<dbReference type="InterPro" id="IPR029000">
    <property type="entry name" value="Cyclophilin-like_dom_sf"/>
</dbReference>
<dbReference type="InterPro" id="IPR016185">
    <property type="entry name" value="PreATP-grasp_dom_sf"/>
</dbReference>
<dbReference type="InterPro" id="IPR011054">
    <property type="entry name" value="Rudment_hybrid_motif"/>
</dbReference>
<dbReference type="InterPro" id="IPR011053">
    <property type="entry name" value="Single_hybrid_motif"/>
</dbReference>
<dbReference type="PANTHER" id="PTHR18866">
    <property type="entry name" value="CARBOXYLASE:PYRUVATE/ACETYL-COA/PROPIONYL-COA CARBOXYLASE"/>
    <property type="match status" value="1"/>
</dbReference>
<dbReference type="PANTHER" id="PTHR18866:SF128">
    <property type="entry name" value="UREA AMIDOLYASE"/>
    <property type="match status" value="1"/>
</dbReference>
<dbReference type="Pfam" id="PF02785">
    <property type="entry name" value="Biotin_carb_C"/>
    <property type="match status" value="1"/>
</dbReference>
<dbReference type="Pfam" id="PF00289">
    <property type="entry name" value="Biotin_carb_N"/>
    <property type="match status" value="1"/>
</dbReference>
<dbReference type="Pfam" id="PF00364">
    <property type="entry name" value="Biotin_lipoyl"/>
    <property type="match status" value="1"/>
</dbReference>
<dbReference type="Pfam" id="PF02786">
    <property type="entry name" value="CPSase_L_D2"/>
    <property type="match status" value="1"/>
</dbReference>
<dbReference type="Pfam" id="PF02626">
    <property type="entry name" value="CT_A_B"/>
    <property type="match status" value="1"/>
</dbReference>
<dbReference type="Pfam" id="PF02682">
    <property type="entry name" value="CT_C_D"/>
    <property type="match status" value="1"/>
</dbReference>
<dbReference type="SMART" id="SM00796">
    <property type="entry name" value="AHS1"/>
    <property type="match status" value="1"/>
</dbReference>
<dbReference type="SMART" id="SM00797">
    <property type="entry name" value="AHS2"/>
    <property type="match status" value="1"/>
</dbReference>
<dbReference type="SMART" id="SM00878">
    <property type="entry name" value="Biotin_carb_C"/>
    <property type="match status" value="1"/>
</dbReference>
<dbReference type="SUPFAM" id="SSF50891">
    <property type="entry name" value="Cyclophilin-like"/>
    <property type="match status" value="2"/>
</dbReference>
<dbReference type="SUPFAM" id="SSF56059">
    <property type="entry name" value="Glutathione synthetase ATP-binding domain-like"/>
    <property type="match status" value="1"/>
</dbReference>
<dbReference type="SUPFAM" id="SSF160467">
    <property type="entry name" value="PH0987 N-terminal domain-like"/>
    <property type="match status" value="1"/>
</dbReference>
<dbReference type="SUPFAM" id="SSF52440">
    <property type="entry name" value="PreATP-grasp domain"/>
    <property type="match status" value="1"/>
</dbReference>
<dbReference type="SUPFAM" id="SSF51246">
    <property type="entry name" value="Rudiment single hybrid motif"/>
    <property type="match status" value="1"/>
</dbReference>
<dbReference type="SUPFAM" id="SSF51230">
    <property type="entry name" value="Single hybrid motif"/>
    <property type="match status" value="1"/>
</dbReference>
<dbReference type="PROSITE" id="PS50975">
    <property type="entry name" value="ATP_GRASP"/>
    <property type="match status" value="1"/>
</dbReference>
<dbReference type="PROSITE" id="PS50979">
    <property type="entry name" value="BC"/>
    <property type="match status" value="1"/>
</dbReference>
<dbReference type="PROSITE" id="PS00188">
    <property type="entry name" value="BIOTIN"/>
    <property type="match status" value="1"/>
</dbReference>
<dbReference type="PROSITE" id="PS50968">
    <property type="entry name" value="BIOTINYL_LIPOYL"/>
    <property type="match status" value="1"/>
</dbReference>
<dbReference type="PROSITE" id="PS00866">
    <property type="entry name" value="CPSASE_1"/>
    <property type="match status" value="1"/>
</dbReference>
<dbReference type="PROSITE" id="PS00867">
    <property type="entry name" value="CPSASE_2"/>
    <property type="match status" value="1"/>
</dbReference>
<sequence length="1241" mass="135753">MEALKTLLIANRGEIAVRVLKTAKKLNIRTIAVYTEPDAASTHVHLADEAILLSGPPSKAYIDGDQIIDIAKRKGADAIIPGYGFLSENSNFARDVASAGLAFVGPSPESIEAFGLKHTARELATKAGVPIVPGSQGLVTSEDEAVKIAQSLGFPVMLKATAGGGGMGLLTCNTEKEVRESFQTVQSRGEALFKNAGLFIERYYPSSHHIEVQVFGNGQGKAISIGERECSIQRRHQKVIEECPSPFVTRNPELRKGLCDAAVRLAESIDYGSAGTIEYLVDDESGKFFFLEMNTRLQVEHGITELCYGVDLVELMLRQADAQLSGRKGLEAEFLSSIPVGAPQGFAIEARVYAENPVRDFAPCPGILQDVDWKETTGSRIDTWVYRGIKVSANYDPLLAKVMYHASSRQKAIEGLRDILTGSRICGPPTNLGFLAEILANKDFNAGNTLTKFLNNFEYNLAAIDVISGGAYTLIQDWPGRPTVGRGFCHSGPMDSVAFRIANALVGNPVGLEGLEITLSGPELRFLGPAVISLCGAPIDAKLDEAPVPMWSRVKVSAGQRLKIGKTTGGGCRAYLAVLGGFPNIAEWFGSKATAPMVGVGGYQGRQLTSGDYLTISAQIPESDNELSLPEHLIPQYPDSWELMSMPGPYDEGYLAPESIDMLYNAEWTISHNAARGGIRLLGPKPTWARPDGGEGGAHPSNLIECGYAIGSINWTGDDPVIFPQDAPDLGGFVSSHTIVKADLWKLGQVKAGDKLKFRATSLKDTLLARNELERFISDIVQCCQKGEDFGSITPLASSLPPAMSSSTRVSGIVHQIPEKGNQPLVSYRQAGDDYLLIDYGVGAFDLNHRYRVTALKKVLSEAAGDISVSNGLINLVGCGNYLPKALMIYYDGTKIPQQKLIDYLCTIETQLGDLSRAKVPSRRFKLPLTFESKRQTDAIKRYMETQRPYASYLPDNIDFVARNNAFTRAELENIYLTASFMVITVGFFTALPIALPVDPRQRMNCPKMNPSRVFTPAGQVSWGGSCLAIYTVDSPGGYQMNGMTIPGVDILGTKRGYAPEKPWLFEDFDQITFYKVTEEEYERQLALFQSGRYEYEWEVVEFDMAEHNRLLKETKEEVKAIRARQRKAQAEMDLLEKELLERWAKEKAERGVSMDTVEELLKDPEITVIEAPLNANVWKVEVKEGDKLDKDQVVVILEAMKLEIAVRAESAAAGAVVEKILAQPGKSIEAGKPLMLVRRG</sequence>
<name>LAMA_EMENI</name>
<protein>
    <recommendedName>
        <fullName>Putative urea carboxylase</fullName>
        <ecNumber>6.3.4.6</ecNumber>
    </recommendedName>
    <alternativeName>
        <fullName>Lactam utilization protein lamA</fullName>
    </alternativeName>
    <alternativeName>
        <fullName>Urea amidolyase</fullName>
    </alternativeName>
</protein>
<keyword id="KW-0067">ATP-binding</keyword>
<keyword id="KW-0092">Biotin</keyword>
<keyword id="KW-0378">Hydrolase</keyword>
<keyword id="KW-0436">Ligase</keyword>
<keyword id="KW-0547">Nucleotide-binding</keyword>
<keyword id="KW-1185">Reference proteome</keyword>
<organism>
    <name type="scientific">Emericella nidulans (strain FGSC A4 / ATCC 38163 / CBS 112.46 / NRRL 194 / M139)</name>
    <name type="common">Aspergillus nidulans</name>
    <dbReference type="NCBI Taxonomy" id="227321"/>
    <lineage>
        <taxon>Eukaryota</taxon>
        <taxon>Fungi</taxon>
        <taxon>Dikarya</taxon>
        <taxon>Ascomycota</taxon>
        <taxon>Pezizomycotina</taxon>
        <taxon>Eurotiomycetes</taxon>
        <taxon>Eurotiomycetidae</taxon>
        <taxon>Eurotiales</taxon>
        <taxon>Aspergillaceae</taxon>
        <taxon>Aspergillus</taxon>
        <taxon>Aspergillus subgen. Nidulantes</taxon>
    </lineage>
</organism>